<evidence type="ECO:0000250" key="1"/>
<evidence type="ECO:0000255" key="2"/>
<evidence type="ECO:0000305" key="3"/>
<accession>B9G934</accession>
<proteinExistence type="inferred from homology"/>
<comment type="cofactor">
    <cofactor evidence="1">
        <name>heme</name>
        <dbReference type="ChEBI" id="CHEBI:30413"/>
    </cofactor>
</comment>
<comment type="subcellular location">
    <subcellularLocation>
        <location evidence="3">Membrane</location>
        <topology evidence="3">Single-pass type III membrane protein</topology>
    </subcellularLocation>
</comment>
<comment type="similarity">
    <text evidence="3">Belongs to the cytochrome P450 family.</text>
</comment>
<comment type="sequence caution" evidence="3">
    <conflict type="erroneous gene model prediction">
        <sequence resource="EMBL-CDS" id="EEE51540"/>
    </conflict>
</comment>
<reference key="1">
    <citation type="journal article" date="2005" name="Nature">
        <title>The map-based sequence of the rice genome.</title>
        <authorList>
            <consortium name="International rice genome sequencing project (IRGSP)"/>
        </authorList>
    </citation>
    <scope>NUCLEOTIDE SEQUENCE [LARGE SCALE GENOMIC DNA]</scope>
    <source>
        <strain>cv. Nipponbare</strain>
    </source>
</reference>
<reference key="2">
    <citation type="journal article" date="2008" name="Nucleic Acids Res.">
        <title>The rice annotation project database (RAP-DB): 2008 update.</title>
        <authorList>
            <consortium name="The rice annotation project (RAP)"/>
        </authorList>
    </citation>
    <scope>GENOME REANNOTATION</scope>
    <source>
        <strain>cv. Nipponbare</strain>
    </source>
</reference>
<reference key="3">
    <citation type="journal article" date="2013" name="Rice">
        <title>Improvement of the Oryza sativa Nipponbare reference genome using next generation sequence and optical map data.</title>
        <authorList>
            <person name="Kawahara Y."/>
            <person name="de la Bastide M."/>
            <person name="Hamilton J.P."/>
            <person name="Kanamori H."/>
            <person name="McCombie W.R."/>
            <person name="Ouyang S."/>
            <person name="Schwartz D.C."/>
            <person name="Tanaka T."/>
            <person name="Wu J."/>
            <person name="Zhou S."/>
            <person name="Childs K.L."/>
            <person name="Davidson R.M."/>
            <person name="Lin H."/>
            <person name="Quesada-Ocampo L."/>
            <person name="Vaillancourt B."/>
            <person name="Sakai H."/>
            <person name="Lee S.S."/>
            <person name="Kim J."/>
            <person name="Numa H."/>
            <person name="Itoh T."/>
            <person name="Buell C.R."/>
            <person name="Matsumoto T."/>
        </authorList>
    </citation>
    <scope>GENOME REANNOTATION</scope>
    <source>
        <strain>cv. Nipponbare</strain>
    </source>
</reference>
<reference key="4">
    <citation type="journal article" date="2005" name="PLoS Biol.">
        <title>The genomes of Oryza sativa: a history of duplications.</title>
        <authorList>
            <person name="Yu J."/>
            <person name="Wang J."/>
            <person name="Lin W."/>
            <person name="Li S."/>
            <person name="Li H."/>
            <person name="Zhou J."/>
            <person name="Ni P."/>
            <person name="Dong W."/>
            <person name="Hu S."/>
            <person name="Zeng C."/>
            <person name="Zhang J."/>
            <person name="Zhang Y."/>
            <person name="Li R."/>
            <person name="Xu Z."/>
            <person name="Li S."/>
            <person name="Li X."/>
            <person name="Zheng H."/>
            <person name="Cong L."/>
            <person name="Lin L."/>
            <person name="Yin J."/>
            <person name="Geng J."/>
            <person name="Li G."/>
            <person name="Shi J."/>
            <person name="Liu J."/>
            <person name="Lv H."/>
            <person name="Li J."/>
            <person name="Wang J."/>
            <person name="Deng Y."/>
            <person name="Ran L."/>
            <person name="Shi X."/>
            <person name="Wang X."/>
            <person name="Wu Q."/>
            <person name="Li C."/>
            <person name="Ren X."/>
            <person name="Wang J."/>
            <person name="Wang X."/>
            <person name="Li D."/>
            <person name="Liu D."/>
            <person name="Zhang X."/>
            <person name="Ji Z."/>
            <person name="Zhao W."/>
            <person name="Sun Y."/>
            <person name="Zhang Z."/>
            <person name="Bao J."/>
            <person name="Han Y."/>
            <person name="Dong L."/>
            <person name="Ji J."/>
            <person name="Chen P."/>
            <person name="Wu S."/>
            <person name="Liu J."/>
            <person name="Xiao Y."/>
            <person name="Bu D."/>
            <person name="Tan J."/>
            <person name="Yang L."/>
            <person name="Ye C."/>
            <person name="Zhang J."/>
            <person name="Xu J."/>
            <person name="Zhou Y."/>
            <person name="Yu Y."/>
            <person name="Zhang B."/>
            <person name="Zhuang S."/>
            <person name="Wei H."/>
            <person name="Liu B."/>
            <person name="Lei M."/>
            <person name="Yu H."/>
            <person name="Li Y."/>
            <person name="Xu H."/>
            <person name="Wei S."/>
            <person name="He X."/>
            <person name="Fang L."/>
            <person name="Zhang Z."/>
            <person name="Zhang Y."/>
            <person name="Huang X."/>
            <person name="Su Z."/>
            <person name="Tong W."/>
            <person name="Li J."/>
            <person name="Tong Z."/>
            <person name="Li S."/>
            <person name="Ye J."/>
            <person name="Wang L."/>
            <person name="Fang L."/>
            <person name="Lei T."/>
            <person name="Chen C.-S."/>
            <person name="Chen H.-C."/>
            <person name="Xu Z."/>
            <person name="Li H."/>
            <person name="Huang H."/>
            <person name="Zhang F."/>
            <person name="Xu H."/>
            <person name="Li N."/>
            <person name="Zhao C."/>
            <person name="Li S."/>
            <person name="Dong L."/>
            <person name="Huang Y."/>
            <person name="Li L."/>
            <person name="Xi Y."/>
            <person name="Qi Q."/>
            <person name="Li W."/>
            <person name="Zhang B."/>
            <person name="Hu W."/>
            <person name="Zhang Y."/>
            <person name="Tian X."/>
            <person name="Jiao Y."/>
            <person name="Liang X."/>
            <person name="Jin J."/>
            <person name="Gao L."/>
            <person name="Zheng W."/>
            <person name="Hao B."/>
            <person name="Liu S.-M."/>
            <person name="Wang W."/>
            <person name="Yuan L."/>
            <person name="Cao M."/>
            <person name="McDermott J."/>
            <person name="Samudrala R."/>
            <person name="Wang J."/>
            <person name="Wong G.K.-S."/>
            <person name="Yang H."/>
        </authorList>
    </citation>
    <scope>NUCLEOTIDE SEQUENCE [LARGE SCALE GENOMIC DNA]</scope>
    <source>
        <strain>cv. Nipponbare</strain>
    </source>
</reference>
<reference key="5">
    <citation type="journal article" date="2009" name="Hum. Genomics">
        <title>The cytochrome p450 homepage.</title>
        <authorList>
            <person name="Nelson D.R."/>
        </authorList>
    </citation>
    <scope>IDENTIFICATION</scope>
</reference>
<name>C14C3_ORYSJ</name>
<organism>
    <name type="scientific">Oryza sativa subsp. japonica</name>
    <name type="common">Rice</name>
    <dbReference type="NCBI Taxonomy" id="39947"/>
    <lineage>
        <taxon>Eukaryota</taxon>
        <taxon>Viridiplantae</taxon>
        <taxon>Streptophyta</taxon>
        <taxon>Embryophyta</taxon>
        <taxon>Tracheophyta</taxon>
        <taxon>Spermatophyta</taxon>
        <taxon>Magnoliopsida</taxon>
        <taxon>Liliopsida</taxon>
        <taxon>Poales</taxon>
        <taxon>Poaceae</taxon>
        <taxon>BOP clade</taxon>
        <taxon>Oryzoideae</taxon>
        <taxon>Oryzeae</taxon>
        <taxon>Oryzinae</taxon>
        <taxon>Oryza</taxon>
        <taxon>Oryza sativa</taxon>
    </lineage>
</organism>
<sequence>MEKLLALIVVLVILLSLALFYLCNILWLRAVKIRKKLRRQGIRGPKPTFLYGNTKEIKRIRQELKLSQKQGTNNFISTLFPHFLLWRETYGPVFLYSTGAMEILQVSHPDMVKDIGRWTPSELGKPNYLKKSRKALFGGGLFTENGDEWAYQRKIIAPEFFMDKIKGMIQLIEDATVPVLEAWEDMIDDEGGCREIVVDDYLRNLSADVIARACFGSSFTKGEEIFCKLRQLQKAIARQDSFVGLSALWKYLPTKSSQEIQMLDEQVRLLILDVAKEQHHYQDSHNSLVNAIIDGAQDGRSAAEAEDFIVGNCKTIYFGGHESTAVTAIWCLMLLATHPEWQERARAEAMEVCRGRSTLDVDALRRLKIVTMVIQETLRLYPPASVMMREALTDVKLGSIEVPRGTIVQVPRLMLHLDKEAWGADADEFRPDRFANGVAAACRAAHMYVPFGHGPRTCIGQNLAMAELKVVLARLLTKFAFSPSPRYRHSPAFRLTIEPGFGLPLMVTKLP</sequence>
<dbReference type="EC" id="1.14.-.-"/>
<dbReference type="EMBL" id="AP008217">
    <property type="status" value="NOT_ANNOTATED_CDS"/>
    <property type="molecule type" value="Genomic_DNA"/>
</dbReference>
<dbReference type="EMBL" id="AP014967">
    <property type="status" value="NOT_ANNOTATED_CDS"/>
    <property type="molecule type" value="Genomic_DNA"/>
</dbReference>
<dbReference type="EMBL" id="CM000148">
    <property type="protein sequence ID" value="EEE51540.1"/>
    <property type="status" value="ALT_SEQ"/>
    <property type="molecule type" value="Genomic_DNA"/>
</dbReference>
<dbReference type="SMR" id="B9G934"/>
<dbReference type="FunCoup" id="B9G934">
    <property type="interactions" value="715"/>
</dbReference>
<dbReference type="STRING" id="39947.B9G934"/>
<dbReference type="PaxDb" id="39947-B9G934"/>
<dbReference type="HOGENOM" id="CLU_001570_5_0_1"/>
<dbReference type="InParanoid" id="B9G934"/>
<dbReference type="Proteomes" id="UP000000763">
    <property type="component" value="Chromosome 11"/>
</dbReference>
<dbReference type="Proteomes" id="UP000007752">
    <property type="component" value="Chromosome 11"/>
</dbReference>
<dbReference type="Proteomes" id="UP000059680">
    <property type="component" value="Chromosome 11"/>
</dbReference>
<dbReference type="GO" id="GO:0016020">
    <property type="term" value="C:membrane"/>
    <property type="evidence" value="ECO:0007669"/>
    <property type="project" value="UniProtKB-SubCell"/>
</dbReference>
<dbReference type="GO" id="GO:0020037">
    <property type="term" value="F:heme binding"/>
    <property type="evidence" value="ECO:0007669"/>
    <property type="project" value="InterPro"/>
</dbReference>
<dbReference type="GO" id="GO:0005506">
    <property type="term" value="F:iron ion binding"/>
    <property type="evidence" value="ECO:0007669"/>
    <property type="project" value="InterPro"/>
</dbReference>
<dbReference type="GO" id="GO:0004497">
    <property type="term" value="F:monooxygenase activity"/>
    <property type="evidence" value="ECO:0000318"/>
    <property type="project" value="GO_Central"/>
</dbReference>
<dbReference type="GO" id="GO:0016705">
    <property type="term" value="F:oxidoreductase activity, acting on paired donors, with incorporation or reduction of molecular oxygen"/>
    <property type="evidence" value="ECO:0007669"/>
    <property type="project" value="InterPro"/>
</dbReference>
<dbReference type="GO" id="GO:0006629">
    <property type="term" value="P:lipid metabolic process"/>
    <property type="evidence" value="ECO:0007669"/>
    <property type="project" value="UniProtKB-ARBA"/>
</dbReference>
<dbReference type="CDD" id="cd20640">
    <property type="entry name" value="CYP714"/>
    <property type="match status" value="1"/>
</dbReference>
<dbReference type="Gene3D" id="1.10.630.10">
    <property type="entry name" value="Cytochrome P450"/>
    <property type="match status" value="1"/>
</dbReference>
<dbReference type="InterPro" id="IPR001128">
    <property type="entry name" value="Cyt_P450"/>
</dbReference>
<dbReference type="InterPro" id="IPR017972">
    <property type="entry name" value="Cyt_P450_CS"/>
</dbReference>
<dbReference type="InterPro" id="IPR002401">
    <property type="entry name" value="Cyt_P450_E_grp-I"/>
</dbReference>
<dbReference type="InterPro" id="IPR036396">
    <property type="entry name" value="Cyt_P450_sf"/>
</dbReference>
<dbReference type="InterPro" id="IPR050665">
    <property type="entry name" value="Cytochrome_P450_Monooxygen"/>
</dbReference>
<dbReference type="PANTHER" id="PTHR24282:SF141">
    <property type="entry name" value="CYTOCHROME P450 714C3"/>
    <property type="match status" value="1"/>
</dbReference>
<dbReference type="PANTHER" id="PTHR24282">
    <property type="entry name" value="CYTOCHROME P450 FAMILY MEMBER"/>
    <property type="match status" value="1"/>
</dbReference>
<dbReference type="Pfam" id="PF00067">
    <property type="entry name" value="p450"/>
    <property type="match status" value="1"/>
</dbReference>
<dbReference type="PRINTS" id="PR00463">
    <property type="entry name" value="EP450I"/>
</dbReference>
<dbReference type="PRINTS" id="PR00385">
    <property type="entry name" value="P450"/>
</dbReference>
<dbReference type="SUPFAM" id="SSF48264">
    <property type="entry name" value="Cytochrome P450"/>
    <property type="match status" value="1"/>
</dbReference>
<dbReference type="PROSITE" id="PS00086">
    <property type="entry name" value="CYTOCHROME_P450"/>
    <property type="match status" value="1"/>
</dbReference>
<feature type="chain" id="PRO_0000422417" description="Cytochrome P450 714C3">
    <location>
        <begin position="1"/>
        <end position="511"/>
    </location>
</feature>
<feature type="topological domain" description="Lumenal" evidence="2">
    <location>
        <begin position="1"/>
        <end position="6"/>
    </location>
</feature>
<feature type="transmembrane region" description="Helical; Signal-anchor for type III membrane protein" evidence="2">
    <location>
        <begin position="7"/>
        <end position="27"/>
    </location>
</feature>
<feature type="topological domain" description="Cytoplasmic" evidence="2">
    <location>
        <begin position="28"/>
        <end position="511"/>
    </location>
</feature>
<feature type="binding site" description="axial binding residue" evidence="1">
    <location>
        <position position="458"/>
    </location>
    <ligand>
        <name>heme</name>
        <dbReference type="ChEBI" id="CHEBI:30413"/>
    </ligand>
    <ligandPart>
        <name>Fe</name>
        <dbReference type="ChEBI" id="CHEBI:18248"/>
    </ligandPart>
</feature>
<protein>
    <recommendedName>
        <fullName>Cytochrome P450 714C3</fullName>
        <ecNumber>1.14.-.-</ecNumber>
    </recommendedName>
</protein>
<gene>
    <name type="primary">CYP714C3</name>
    <name type="ordered locus">Os11g0119311</name>
    <name type="ORF">OsJ_32746</name>
</gene>
<keyword id="KW-0349">Heme</keyword>
<keyword id="KW-0408">Iron</keyword>
<keyword id="KW-0472">Membrane</keyword>
<keyword id="KW-0479">Metal-binding</keyword>
<keyword id="KW-0503">Monooxygenase</keyword>
<keyword id="KW-0560">Oxidoreductase</keyword>
<keyword id="KW-1185">Reference proteome</keyword>
<keyword id="KW-0735">Signal-anchor</keyword>
<keyword id="KW-0812">Transmembrane</keyword>
<keyword id="KW-1133">Transmembrane helix</keyword>